<comment type="function">
    <text evidence="1">Acts as a chaperone.</text>
</comment>
<comment type="induction">
    <text evidence="1">By stress conditions e.g. heat shock.</text>
</comment>
<comment type="similarity">
    <text evidence="1">Belongs to the heat shock protein 70 family.</text>
</comment>
<name>DNAK_CORU7</name>
<protein>
    <recommendedName>
        <fullName evidence="1">Chaperone protein DnaK</fullName>
    </recommendedName>
    <alternativeName>
        <fullName evidence="1">HSP70</fullName>
    </alternativeName>
    <alternativeName>
        <fullName evidence="1">Heat shock 70 kDa protein</fullName>
    </alternativeName>
    <alternativeName>
        <fullName evidence="1">Heat shock protein 70</fullName>
    </alternativeName>
</protein>
<proteinExistence type="inferred from homology"/>
<dbReference type="EMBL" id="AM942444">
    <property type="protein sequence ID" value="CAQ05774.1"/>
    <property type="molecule type" value="Genomic_DNA"/>
</dbReference>
<dbReference type="RefSeq" id="WP_012361050.1">
    <property type="nucleotide sequence ID" value="NC_010545.1"/>
</dbReference>
<dbReference type="SMR" id="B1VHX4"/>
<dbReference type="STRING" id="504474.cu1815"/>
<dbReference type="GeneID" id="60604598"/>
<dbReference type="KEGG" id="cur:cu1815"/>
<dbReference type="eggNOG" id="COG0443">
    <property type="taxonomic scope" value="Bacteria"/>
</dbReference>
<dbReference type="HOGENOM" id="CLU_005965_2_1_11"/>
<dbReference type="Proteomes" id="UP000001727">
    <property type="component" value="Chromosome"/>
</dbReference>
<dbReference type="GO" id="GO:0005524">
    <property type="term" value="F:ATP binding"/>
    <property type="evidence" value="ECO:0007669"/>
    <property type="project" value="UniProtKB-UniRule"/>
</dbReference>
<dbReference type="GO" id="GO:0140662">
    <property type="term" value="F:ATP-dependent protein folding chaperone"/>
    <property type="evidence" value="ECO:0007669"/>
    <property type="project" value="InterPro"/>
</dbReference>
<dbReference type="GO" id="GO:0051082">
    <property type="term" value="F:unfolded protein binding"/>
    <property type="evidence" value="ECO:0007669"/>
    <property type="project" value="InterPro"/>
</dbReference>
<dbReference type="CDD" id="cd10234">
    <property type="entry name" value="ASKHA_NBD_HSP70_DnaK-like"/>
    <property type="match status" value="1"/>
</dbReference>
<dbReference type="FunFam" id="2.60.34.10:FF:000014">
    <property type="entry name" value="Chaperone protein DnaK HSP70"/>
    <property type="match status" value="1"/>
</dbReference>
<dbReference type="FunFam" id="1.20.1270.10:FF:000001">
    <property type="entry name" value="Molecular chaperone DnaK"/>
    <property type="match status" value="1"/>
</dbReference>
<dbReference type="FunFam" id="3.30.420.40:FF:000071">
    <property type="entry name" value="Molecular chaperone DnaK"/>
    <property type="match status" value="1"/>
</dbReference>
<dbReference type="FunFam" id="3.90.640.10:FF:000003">
    <property type="entry name" value="Molecular chaperone DnaK"/>
    <property type="match status" value="1"/>
</dbReference>
<dbReference type="Gene3D" id="1.20.1270.10">
    <property type="match status" value="1"/>
</dbReference>
<dbReference type="Gene3D" id="3.30.420.40">
    <property type="match status" value="2"/>
</dbReference>
<dbReference type="Gene3D" id="3.90.640.10">
    <property type="entry name" value="Actin, Chain A, domain 4"/>
    <property type="match status" value="1"/>
</dbReference>
<dbReference type="Gene3D" id="2.60.34.10">
    <property type="entry name" value="Substrate Binding Domain Of DNAk, Chain A, domain 1"/>
    <property type="match status" value="1"/>
</dbReference>
<dbReference type="HAMAP" id="MF_00332">
    <property type="entry name" value="DnaK"/>
    <property type="match status" value="1"/>
</dbReference>
<dbReference type="InterPro" id="IPR043129">
    <property type="entry name" value="ATPase_NBD"/>
</dbReference>
<dbReference type="InterPro" id="IPR012725">
    <property type="entry name" value="Chaperone_DnaK"/>
</dbReference>
<dbReference type="InterPro" id="IPR018181">
    <property type="entry name" value="Heat_shock_70_CS"/>
</dbReference>
<dbReference type="InterPro" id="IPR029048">
    <property type="entry name" value="HSP70_C_sf"/>
</dbReference>
<dbReference type="InterPro" id="IPR029047">
    <property type="entry name" value="HSP70_peptide-bd_sf"/>
</dbReference>
<dbReference type="InterPro" id="IPR013126">
    <property type="entry name" value="Hsp_70_fam"/>
</dbReference>
<dbReference type="NCBIfam" id="NF001413">
    <property type="entry name" value="PRK00290.1"/>
    <property type="match status" value="1"/>
</dbReference>
<dbReference type="NCBIfam" id="TIGR02350">
    <property type="entry name" value="prok_dnaK"/>
    <property type="match status" value="1"/>
</dbReference>
<dbReference type="PANTHER" id="PTHR19375">
    <property type="entry name" value="HEAT SHOCK PROTEIN 70KDA"/>
    <property type="match status" value="1"/>
</dbReference>
<dbReference type="Pfam" id="PF00012">
    <property type="entry name" value="HSP70"/>
    <property type="match status" value="1"/>
</dbReference>
<dbReference type="PRINTS" id="PR00301">
    <property type="entry name" value="HEATSHOCK70"/>
</dbReference>
<dbReference type="SUPFAM" id="SSF53067">
    <property type="entry name" value="Actin-like ATPase domain"/>
    <property type="match status" value="2"/>
</dbReference>
<dbReference type="SUPFAM" id="SSF100934">
    <property type="entry name" value="Heat shock protein 70kD (HSP70), C-terminal subdomain"/>
    <property type="match status" value="1"/>
</dbReference>
<dbReference type="SUPFAM" id="SSF100920">
    <property type="entry name" value="Heat shock protein 70kD (HSP70), peptide-binding domain"/>
    <property type="match status" value="1"/>
</dbReference>
<dbReference type="PROSITE" id="PS00297">
    <property type="entry name" value="HSP70_1"/>
    <property type="match status" value="1"/>
</dbReference>
<dbReference type="PROSITE" id="PS00329">
    <property type="entry name" value="HSP70_2"/>
    <property type="match status" value="1"/>
</dbReference>
<dbReference type="PROSITE" id="PS01036">
    <property type="entry name" value="HSP70_3"/>
    <property type="match status" value="1"/>
</dbReference>
<evidence type="ECO:0000255" key="1">
    <source>
        <dbReference type="HAMAP-Rule" id="MF_00332"/>
    </source>
</evidence>
<evidence type="ECO:0000256" key="2">
    <source>
        <dbReference type="SAM" id="MobiDB-lite"/>
    </source>
</evidence>
<gene>
    <name evidence="1" type="primary">dnaK</name>
    <name type="ordered locus">cu1815</name>
</gene>
<sequence length="617" mass="66609">MGRAVGIDLGTTNSVVSVLEGGEATVIANSEGARTTPSVVAFAKNGEVLVGQSAKNQAVTNVDRTISSVKRHIGNDSWNVEIDDKKYTAQEISARTLMKLKRDAESYLGEDVTDAVITVPAYFNDSQRQATKDAGQIAGLNVLRIVNEPTAAALAYGLEKGDKEQTILVFDLGGGTFDVSLLEIGDGVVEVRATSGDNKLGGDDWDQAIVDWLVEKFKNANGIDLTKDKMALQRLREAAEKAKIELSSSQQASINLPYITVDGDKNPLFLDETLSRTEFQRITQDLLDRTKKPFQAVLKDADVDINEIEHVVLVGGSTRMPAVTDLVKELTGGKEPNKGVNPDEVVAVGAALQAGVLRGEVKDVLLLDVTPLSLGIETKGGVMTKLIERNTTIPTKRSETFTTAEDNQPSVQIQVFQGEREMAQHNKLLGSFELGGIAPAPRGVPQIEVTFDIDANGIVHVTAKDKGTGKENTIKIQDGSGLSQDEIDQMIKDAEAHAEEDKKRREEQEVRNSAESTVYQTRKFVEDNKDKVSEDIQNKVEEAAKAVDEALKGEDIEAIKDAMEKLSAESQEMGKAIYESEAAQAGEAGGAEDAGSEDPNVVDAEVVDEDDSEDEKK</sequence>
<accession>B1VHX4</accession>
<reference key="1">
    <citation type="journal article" date="2008" name="J. Biotechnol.">
        <title>The lifestyle of Corynebacterium urealyticum derived from its complete genome sequence established by pyrosequencing.</title>
        <authorList>
            <person name="Tauch A."/>
            <person name="Trost E."/>
            <person name="Tilker A."/>
            <person name="Ludewig U."/>
            <person name="Schneiker S."/>
            <person name="Goesmann A."/>
            <person name="Arnold W."/>
            <person name="Bekel T."/>
            <person name="Brinkrolf K."/>
            <person name="Brune I."/>
            <person name="Goetker S."/>
            <person name="Kalinowski J."/>
            <person name="Kamp P.-B."/>
            <person name="Lobo F.P."/>
            <person name="Viehoever P."/>
            <person name="Weisshaar B."/>
            <person name="Soriano F."/>
            <person name="Droege M."/>
            <person name="Puehler A."/>
        </authorList>
    </citation>
    <scope>NUCLEOTIDE SEQUENCE [LARGE SCALE GENOMIC DNA]</scope>
    <source>
        <strain>ATCC 43042 / DSM 7109</strain>
    </source>
</reference>
<organism>
    <name type="scientific">Corynebacterium urealyticum (strain ATCC 43042 / DSM 7109)</name>
    <dbReference type="NCBI Taxonomy" id="504474"/>
    <lineage>
        <taxon>Bacteria</taxon>
        <taxon>Bacillati</taxon>
        <taxon>Actinomycetota</taxon>
        <taxon>Actinomycetes</taxon>
        <taxon>Mycobacteriales</taxon>
        <taxon>Corynebacteriaceae</taxon>
        <taxon>Corynebacterium</taxon>
    </lineage>
</organism>
<feature type="chain" id="PRO_1000119692" description="Chaperone protein DnaK">
    <location>
        <begin position="1"/>
        <end position="617"/>
    </location>
</feature>
<feature type="region of interest" description="Disordered" evidence="2">
    <location>
        <begin position="496"/>
        <end position="515"/>
    </location>
</feature>
<feature type="region of interest" description="Disordered" evidence="2">
    <location>
        <begin position="567"/>
        <end position="617"/>
    </location>
</feature>
<feature type="compositionally biased region" description="Basic and acidic residues" evidence="2">
    <location>
        <begin position="496"/>
        <end position="512"/>
    </location>
</feature>
<feature type="compositionally biased region" description="Low complexity" evidence="2">
    <location>
        <begin position="579"/>
        <end position="604"/>
    </location>
</feature>
<feature type="compositionally biased region" description="Acidic residues" evidence="2">
    <location>
        <begin position="605"/>
        <end position="617"/>
    </location>
</feature>
<feature type="modified residue" description="Phosphothreonine; by autocatalysis" evidence="1">
    <location>
        <position position="176"/>
    </location>
</feature>
<keyword id="KW-0067">ATP-binding</keyword>
<keyword id="KW-0143">Chaperone</keyword>
<keyword id="KW-0547">Nucleotide-binding</keyword>
<keyword id="KW-0597">Phosphoprotein</keyword>
<keyword id="KW-1185">Reference proteome</keyword>
<keyword id="KW-0346">Stress response</keyword>